<organism>
    <name type="scientific">Streptococcus uberis (strain ATCC BAA-854 / 0140J)</name>
    <dbReference type="NCBI Taxonomy" id="218495"/>
    <lineage>
        <taxon>Bacteria</taxon>
        <taxon>Bacillati</taxon>
        <taxon>Bacillota</taxon>
        <taxon>Bacilli</taxon>
        <taxon>Lactobacillales</taxon>
        <taxon>Streptococcaceae</taxon>
        <taxon>Streptococcus</taxon>
    </lineage>
</organism>
<reference key="1">
    <citation type="journal article" date="2009" name="BMC Genomics">
        <title>Evidence for niche adaptation in the genome of the bovine pathogen Streptococcus uberis.</title>
        <authorList>
            <person name="Ward P.N."/>
            <person name="Holden M.T.G."/>
            <person name="Leigh J.A."/>
            <person name="Lennard N."/>
            <person name="Bignell A."/>
            <person name="Barron A."/>
            <person name="Clark L."/>
            <person name="Quail M.A."/>
            <person name="Woodward J."/>
            <person name="Barrell B.G."/>
            <person name="Egan S.A."/>
            <person name="Field T.R."/>
            <person name="Maskell D."/>
            <person name="Kehoe M."/>
            <person name="Dowson C.G."/>
            <person name="Chanter N."/>
            <person name="Whatmore A.M."/>
            <person name="Bentley S.D."/>
            <person name="Parkhill J."/>
        </authorList>
    </citation>
    <scope>NUCLEOTIDE SEQUENCE [LARGE SCALE GENOMIC DNA]</scope>
    <source>
        <strain>ATCC BAA-854 / 0140J</strain>
    </source>
</reference>
<keyword id="KW-1185">Reference proteome</keyword>
<keyword id="KW-0687">Ribonucleoprotein</keyword>
<keyword id="KW-0689">Ribosomal protein</keyword>
<keyword id="KW-0694">RNA-binding</keyword>
<keyword id="KW-0699">rRNA-binding</keyword>
<evidence type="ECO:0000255" key="1">
    <source>
        <dbReference type="HAMAP-Rule" id="MF_01325"/>
    </source>
</evidence>
<evidence type="ECO:0000256" key="2">
    <source>
        <dbReference type="SAM" id="MobiDB-lite"/>
    </source>
</evidence>
<evidence type="ECO:0000305" key="3"/>
<accession>B9DSV0</accession>
<comment type="function">
    <text evidence="1">One of the primary rRNA binding proteins, it binds directly near the 3'-end of the 23S rRNA, where it nucleates assembly of the 50S subunit.</text>
</comment>
<comment type="subunit">
    <text evidence="1">Part of the 50S ribosomal subunit. Forms a cluster with proteins L14 and L19.</text>
</comment>
<comment type="similarity">
    <text evidence="1">Belongs to the universal ribosomal protein uL3 family.</text>
</comment>
<dbReference type="EMBL" id="AM946015">
    <property type="protein sequence ID" value="CAR40439.1"/>
    <property type="molecule type" value="Genomic_DNA"/>
</dbReference>
<dbReference type="RefSeq" id="WP_012657633.1">
    <property type="nucleotide sequence ID" value="NC_012004.1"/>
</dbReference>
<dbReference type="SMR" id="B9DSV0"/>
<dbReference type="STRING" id="218495.SUB0068"/>
<dbReference type="GeneID" id="93825294"/>
<dbReference type="KEGG" id="sub:SUB0068"/>
<dbReference type="eggNOG" id="COG0087">
    <property type="taxonomic scope" value="Bacteria"/>
</dbReference>
<dbReference type="HOGENOM" id="CLU_044142_4_1_9"/>
<dbReference type="OrthoDB" id="9806135at2"/>
<dbReference type="Proteomes" id="UP000000449">
    <property type="component" value="Chromosome"/>
</dbReference>
<dbReference type="GO" id="GO:0022625">
    <property type="term" value="C:cytosolic large ribosomal subunit"/>
    <property type="evidence" value="ECO:0007669"/>
    <property type="project" value="TreeGrafter"/>
</dbReference>
<dbReference type="GO" id="GO:0019843">
    <property type="term" value="F:rRNA binding"/>
    <property type="evidence" value="ECO:0007669"/>
    <property type="project" value="UniProtKB-UniRule"/>
</dbReference>
<dbReference type="GO" id="GO:0003735">
    <property type="term" value="F:structural constituent of ribosome"/>
    <property type="evidence" value="ECO:0007669"/>
    <property type="project" value="InterPro"/>
</dbReference>
<dbReference type="GO" id="GO:0006412">
    <property type="term" value="P:translation"/>
    <property type="evidence" value="ECO:0007669"/>
    <property type="project" value="UniProtKB-UniRule"/>
</dbReference>
<dbReference type="FunFam" id="2.40.30.10:FF:000004">
    <property type="entry name" value="50S ribosomal protein L3"/>
    <property type="match status" value="1"/>
</dbReference>
<dbReference type="FunFam" id="3.30.160.810:FF:000002">
    <property type="entry name" value="50S ribosomal protein L3"/>
    <property type="match status" value="1"/>
</dbReference>
<dbReference type="Gene3D" id="3.30.160.810">
    <property type="match status" value="1"/>
</dbReference>
<dbReference type="Gene3D" id="2.40.30.10">
    <property type="entry name" value="Translation factors"/>
    <property type="match status" value="1"/>
</dbReference>
<dbReference type="HAMAP" id="MF_01325_B">
    <property type="entry name" value="Ribosomal_uL3_B"/>
    <property type="match status" value="1"/>
</dbReference>
<dbReference type="InterPro" id="IPR000597">
    <property type="entry name" value="Ribosomal_uL3"/>
</dbReference>
<dbReference type="InterPro" id="IPR019927">
    <property type="entry name" value="Ribosomal_uL3_bac/org-type"/>
</dbReference>
<dbReference type="InterPro" id="IPR019926">
    <property type="entry name" value="Ribosomal_uL3_CS"/>
</dbReference>
<dbReference type="InterPro" id="IPR009000">
    <property type="entry name" value="Transl_B-barrel_sf"/>
</dbReference>
<dbReference type="NCBIfam" id="TIGR03625">
    <property type="entry name" value="L3_bact"/>
    <property type="match status" value="1"/>
</dbReference>
<dbReference type="PANTHER" id="PTHR11229">
    <property type="entry name" value="50S RIBOSOMAL PROTEIN L3"/>
    <property type="match status" value="1"/>
</dbReference>
<dbReference type="PANTHER" id="PTHR11229:SF16">
    <property type="entry name" value="LARGE RIBOSOMAL SUBUNIT PROTEIN UL3C"/>
    <property type="match status" value="1"/>
</dbReference>
<dbReference type="Pfam" id="PF00297">
    <property type="entry name" value="Ribosomal_L3"/>
    <property type="match status" value="1"/>
</dbReference>
<dbReference type="SUPFAM" id="SSF50447">
    <property type="entry name" value="Translation proteins"/>
    <property type="match status" value="1"/>
</dbReference>
<dbReference type="PROSITE" id="PS00474">
    <property type="entry name" value="RIBOSOMAL_L3"/>
    <property type="match status" value="1"/>
</dbReference>
<proteinExistence type="inferred from homology"/>
<protein>
    <recommendedName>
        <fullName evidence="1">Large ribosomal subunit protein uL3</fullName>
    </recommendedName>
    <alternativeName>
        <fullName evidence="3">50S ribosomal protein L3</fullName>
    </alternativeName>
</protein>
<name>RL3_STRU0</name>
<feature type="chain" id="PRO_1000165908" description="Large ribosomal subunit protein uL3">
    <location>
        <begin position="1"/>
        <end position="208"/>
    </location>
</feature>
<feature type="region of interest" description="Disordered" evidence="2">
    <location>
        <begin position="123"/>
        <end position="147"/>
    </location>
</feature>
<sequence length="208" mass="22382">MTKGILGKKVGMTQIFTESGEFIPVTVIEATPNVVLQVKTVETDGYEAVQVGFDDKREVLSNKPAKGHVAKANTAPKRFIREFKNIEGLEVGSEITVESFSAGDVVDVTGTSKGKGFQGVIKRHGQSRGPMAHGSRYHRRPGSMGPVAPNRVFKNKHLAGRMGGNRVTIQNLEIVQVIPEKNVILIKGNVPGAKKSLITIKSAVKAAK</sequence>
<gene>
    <name evidence="1" type="primary">rplC</name>
    <name type="ordered locus">SUB0068</name>
</gene>